<sequence>MASVSFQDRGRKRVPLSLYAPLRVTNDKPLSKVLANNAVPTNKGNKDQQIGYWNEQIRWRMRRGERIEQPSNWHFYYLGTGPHGDLRYRTRTEGVFWVAKEGAKTEPTNLGVRKASEKPIIPKFSQQLPSVVEIVEPNTPPASRANSRSRSRGNGNNRSRSPSNNRGNNQSRGNSQNRGNNQGRGASQNRGGNNNNNNKSRNQSNNRNQSNDRGGVTSRDDLVAAVKDALKSLGIGENPDRHKQQQKPKQEKSDNSGKNTPKKNKSRATSKERDLKDIPEWRRIPKGENSVAACFGPRGGFKNFGDAEFVEKGVDASGYAQIASLAPNVAALLFGGNVAVRELADSYEITYNYKMTVPKSDPNVELLVSQVDAFKTGNAKLQRKKEKKNKRETTLQQHEEAIYDDVGAPSDVTHANLEWDTAVDGGDTAVEIINEIFDTGN</sequence>
<proteinExistence type="evidence at protein level"/>
<reference key="1">
    <citation type="journal article" date="1993" name="J. Gen. Virol.">
        <title>Sequence determination of the nucleocapsid protein gene of the porcine epidemic diarrhea virus confirms that this virus is a coronavirus related to human coronavirus 229E and porcine transmissible gastroenteritis virus.</title>
        <authorList>
            <person name="Bridgen A."/>
            <person name="Duarte M."/>
            <person name="Tobler K."/>
            <person name="Laude H."/>
            <person name="Ackermann M."/>
        </authorList>
    </citation>
    <scope>NUCLEOTIDE SEQUENCE [GENOMIC RNA]</scope>
</reference>
<reference key="2">
    <citation type="journal article" date="1994" name="Virology">
        <title>Sequence analysis of the porcine epidemic diarrhea virus genome between the nucleocapsid and spike protein genes reveals a polymorphic ORF.</title>
        <authorList>
            <person name="Duarte M."/>
            <person name="Tobler K."/>
            <person name="Bridgen A."/>
            <person name="Rasschaert D."/>
            <person name="Ackermann M."/>
            <person name="Laude H."/>
        </authorList>
    </citation>
    <scope>NUCLEOTIDE SEQUENCE [GENOMIC RNA]</scope>
</reference>
<reference key="3">
    <citation type="journal article" date="1998" name="Adv. Exp. Med. Biol.">
        <title>Further analysis of the genome of porcine epidemic diarrhea virus.</title>
        <authorList>
            <person name="Bridgen A."/>
            <person name="Kocherhans R."/>
            <person name="Tobler K."/>
            <person name="Carvajal A."/>
            <person name="Ackermann M."/>
        </authorList>
    </citation>
    <scope>NUCLEOTIDE SEQUENCE [GENOMIC RNA]</scope>
</reference>
<reference key="4">
    <citation type="journal article" date="2001" name="Virus Genes">
        <title>Completion of the porcine epidemic diarrhoea coronavirus (PEDV) genome sequence.</title>
        <authorList>
            <person name="Kocherhans R."/>
            <person name="Bridgen A."/>
            <person name="Ackermann M."/>
            <person name="Tobler K."/>
        </authorList>
    </citation>
    <scope>NUCLEOTIDE SEQUENCE [GENOMIC RNA]</scope>
</reference>
<reference key="5">
    <citation type="submission" date="2006-01" db="EMBL/GenBank/DDBJ databases">
        <title>Molecular characteristics of nucleocapsid protein gene of porcine epidemic diarrhea virus strain CV777.</title>
        <authorList>
            <person name="Chen J.F."/>
            <person name="Feng L."/>
            <person name="Shi H.Y."/>
            <person name="Sun D.B."/>
            <person name="Tong Y.E."/>
        </authorList>
    </citation>
    <scope>NUCLEOTIDE SEQUENCE [GENOMIC RNA]</scope>
</reference>
<reference key="6">
    <citation type="journal article" date="2020" name="Arch. Virol.">
        <title>The antiviral protein viperin interacts with the viral N protein to inhibit proliferation of porcine epidemic diarrhea virus.</title>
        <authorList>
            <person name="Wu J."/>
            <person name="Chi H."/>
            <person name="Fu Y."/>
            <person name="Cao A."/>
            <person name="Shi J."/>
            <person name="Zhu M."/>
            <person name="Zhang L."/>
            <person name="Hua D."/>
            <person name="Huang J."/>
        </authorList>
    </citation>
    <scope>INTERACTION WITH HOST RSAD2</scope>
    <scope>SUBCELLULAR LOCATION</scope>
</reference>
<protein>
    <recommendedName>
        <fullName evidence="1">Nucleoprotein</fullName>
    </recommendedName>
    <alternativeName>
        <fullName evidence="1">Nucleocapsid protein</fullName>
        <shortName evidence="1">NC</shortName>
        <shortName evidence="1">Protein N</shortName>
    </alternativeName>
</protein>
<comment type="function">
    <text evidence="1">Packages the positive strand viral genome RNA into a helical ribonucleocapsid (RNP) and plays a fundamental role during virion assembly through its interactions with the viral genome and membrane protein M. Plays an important role in enhancing the efficiency of subgenomic viral RNA transcription as well as viral replication.</text>
</comment>
<comment type="subunit">
    <text evidence="1 5">Homooligomer. Both monomeric and oligomeric forms interact with RNA. Interacts with protein M. Interacts with NSP3; this interaction serves to tether the genome to the newly translated replicase-transcriptase complex at a very early stage of infection (By similarity). Interacts with host RSAD2; this interaction inhibits viral replication (PubMed:32719955).</text>
</comment>
<comment type="subcellular location">
    <subcellularLocation>
        <location evidence="1">Virion</location>
    </subcellularLocation>
    <subcellularLocation>
        <location evidence="1 5">Host endoplasmic reticulum-Golgi intermediate compartment</location>
    </subcellularLocation>
    <subcellularLocation>
        <location evidence="1">Host Golgi apparatus</location>
    </subcellularLocation>
    <text evidence="1">Located inside the virion, complexed with the viral RNA. Probably associates with ER-derived membranes where it participates in viral RNA synthesis and virus budding.</text>
</comment>
<comment type="PTM">
    <text evidence="1">ADP-ribosylated. The ADP-ribosylation is retained in the virion during infection.</text>
</comment>
<comment type="PTM">
    <text evidence="1">Phosphorylated on serine and threonine residues.</text>
</comment>
<comment type="similarity">
    <text evidence="1">Belongs to the alphacoronavirus nucleocapsid protein family.</text>
</comment>
<keyword id="KW-0002">3D-structure</keyword>
<keyword id="KW-0013">ADP-ribosylation</keyword>
<keyword id="KW-1040">Host Golgi apparatus</keyword>
<keyword id="KW-0597">Phosphoprotein</keyword>
<keyword id="KW-0687">Ribonucleoprotein</keyword>
<keyword id="KW-0694">RNA-binding</keyword>
<keyword id="KW-0804">Transcription</keyword>
<keyword id="KW-0805">Transcription regulation</keyword>
<keyword id="KW-0543">Viral nucleoprotein</keyword>
<keyword id="KW-0946">Virion</keyword>
<gene>
    <name evidence="1" type="primary">N</name>
    <name type="ORF">6</name>
</gene>
<evidence type="ECO:0000255" key="1">
    <source>
        <dbReference type="HAMAP-Rule" id="MF_04095"/>
    </source>
</evidence>
<evidence type="ECO:0000255" key="2">
    <source>
        <dbReference type="PROSITE-ProRule" id="PRU01276"/>
    </source>
</evidence>
<evidence type="ECO:0000255" key="3">
    <source>
        <dbReference type="PROSITE-ProRule" id="PRU01277"/>
    </source>
</evidence>
<evidence type="ECO:0000256" key="4">
    <source>
        <dbReference type="SAM" id="MobiDB-lite"/>
    </source>
</evidence>
<evidence type="ECO:0000269" key="5">
    <source>
    </source>
</evidence>
<feature type="chain" id="PRO_0000283929" description="Nucleoprotein">
    <location>
        <begin position="1"/>
        <end position="441"/>
    </location>
</feature>
<feature type="domain" description="CoV N NTD" evidence="2">
    <location>
        <begin position="14"/>
        <end position="136"/>
    </location>
</feature>
<feature type="domain" description="CoV N CTD" evidence="3">
    <location>
        <begin position="266"/>
        <end position="382"/>
    </location>
</feature>
<feature type="region of interest" description="RNA-binding" evidence="1">
    <location>
        <begin position="16"/>
        <end position="146"/>
    </location>
</feature>
<feature type="region of interest" description="Disordered" evidence="4">
    <location>
        <begin position="131"/>
        <end position="219"/>
    </location>
</feature>
<feature type="region of interest" description="Disordered" evidence="4">
    <location>
        <begin position="231"/>
        <end position="278"/>
    </location>
</feature>
<feature type="region of interest" description="Dimerization" evidence="1">
    <location>
        <begin position="277"/>
        <end position="379"/>
    </location>
</feature>
<feature type="compositionally biased region" description="Low complexity" evidence="4">
    <location>
        <begin position="143"/>
        <end position="215"/>
    </location>
</feature>
<feature type="compositionally biased region" description="Basic and acidic residues" evidence="4">
    <location>
        <begin position="238"/>
        <end position="255"/>
    </location>
</feature>
<feature type="compositionally biased region" description="Basic and acidic residues" evidence="4">
    <location>
        <begin position="269"/>
        <end position="278"/>
    </location>
</feature>
<feature type="modified residue" description="Phosphoserine; by host" evidence="1">
    <location>
        <position position="5"/>
    </location>
</feature>
<feature type="modified residue" description="Phosphoserine; by host" evidence="1">
    <location>
        <position position="143"/>
    </location>
</feature>
<organism>
    <name type="scientific">Porcine epidemic diarrhea virus (strain CV777)</name>
    <name type="common">PEDV</name>
    <dbReference type="NCBI Taxonomy" id="229032"/>
    <lineage>
        <taxon>Viruses</taxon>
        <taxon>Riboviria</taxon>
        <taxon>Orthornavirae</taxon>
        <taxon>Pisuviricota</taxon>
        <taxon>Pisoniviricetes</taxon>
        <taxon>Nidovirales</taxon>
        <taxon>Cornidovirineae</taxon>
        <taxon>Coronaviridae</taxon>
        <taxon>Orthocoronavirinae</taxon>
        <taxon>Alphacoronavirus</taxon>
        <taxon>Pedacovirus</taxon>
        <taxon>Porcine epidemic diarrhea virus</taxon>
    </lineage>
</organism>
<dbReference type="EMBL" id="Z14976">
    <property type="protein sequence ID" value="CAA78697.1"/>
    <property type="molecule type" value="Genomic_RNA"/>
</dbReference>
<dbReference type="EMBL" id="AF353511">
    <property type="protein sequence ID" value="AAK38660.1"/>
    <property type="molecule type" value="Genomic_RNA"/>
</dbReference>
<dbReference type="EMBL" id="DQ355221">
    <property type="protein sequence ID" value="ABC84372.1"/>
    <property type="molecule type" value="Genomic_RNA"/>
</dbReference>
<dbReference type="PIR" id="JQ2191">
    <property type="entry name" value="JQ2191"/>
</dbReference>
<dbReference type="RefSeq" id="NP_598314.1">
    <property type="nucleotide sequence ID" value="NC_003436.1"/>
</dbReference>
<dbReference type="PDB" id="8WQK">
    <property type="method" value="X-ray"/>
    <property type="resolution" value="2.88 A"/>
    <property type="chains" value="A/B/C/D/E/F/G/H=273-375"/>
</dbReference>
<dbReference type="PDBsum" id="8WQK"/>
<dbReference type="SMR" id="Q07499"/>
<dbReference type="KEGG" id="vg:935179"/>
<dbReference type="Proteomes" id="UP000008159">
    <property type="component" value="Segment"/>
</dbReference>
<dbReference type="GO" id="GO:0044172">
    <property type="term" value="C:host cell endoplasmic reticulum-Golgi intermediate compartment"/>
    <property type="evidence" value="ECO:0007669"/>
    <property type="project" value="UniProtKB-SubCell"/>
</dbReference>
<dbReference type="GO" id="GO:0044177">
    <property type="term" value="C:host cell Golgi apparatus"/>
    <property type="evidence" value="ECO:0007669"/>
    <property type="project" value="UniProtKB-SubCell"/>
</dbReference>
<dbReference type="GO" id="GO:1990904">
    <property type="term" value="C:ribonucleoprotein complex"/>
    <property type="evidence" value="ECO:0007669"/>
    <property type="project" value="UniProtKB-KW"/>
</dbReference>
<dbReference type="GO" id="GO:0019013">
    <property type="term" value="C:viral nucleocapsid"/>
    <property type="evidence" value="ECO:0007669"/>
    <property type="project" value="UniProtKB-KW"/>
</dbReference>
<dbReference type="GO" id="GO:0003723">
    <property type="term" value="F:RNA binding"/>
    <property type="evidence" value="ECO:0007669"/>
    <property type="project" value="UniProtKB-KW"/>
</dbReference>
<dbReference type="CDD" id="cd21595">
    <property type="entry name" value="CoV_N-CTD"/>
    <property type="match status" value="1"/>
</dbReference>
<dbReference type="CDD" id="cd21554">
    <property type="entry name" value="CoV_N-NTD"/>
    <property type="match status" value="1"/>
</dbReference>
<dbReference type="HAMAP" id="MF_04095">
    <property type="entry name" value="ALPHA_CORONA_NCAP"/>
    <property type="match status" value="1"/>
</dbReference>
<dbReference type="InterPro" id="IPR044344">
    <property type="entry name" value="N_prot_C_CoV"/>
</dbReference>
<dbReference type="InterPro" id="IPR044345">
    <property type="entry name" value="N_prot_N_CoV"/>
</dbReference>
<dbReference type="InterPro" id="IPR042548">
    <property type="entry name" value="NCAP_aCoV"/>
</dbReference>
<dbReference type="InterPro" id="IPR001218">
    <property type="entry name" value="Nucleocap_CoV"/>
</dbReference>
<dbReference type="InterPro" id="IPR037179">
    <property type="entry name" value="Nucleocapsid_C"/>
</dbReference>
<dbReference type="InterPro" id="IPR037195">
    <property type="entry name" value="Nucleocapsid_N"/>
</dbReference>
<dbReference type="Pfam" id="PF00937">
    <property type="entry name" value="CoV_nucleocap"/>
    <property type="match status" value="2"/>
</dbReference>
<dbReference type="PIRSF" id="PIRSF003888">
    <property type="entry name" value="Corona_nucleocap"/>
    <property type="match status" value="1"/>
</dbReference>
<dbReference type="SUPFAM" id="SSF110304">
    <property type="entry name" value="Coronavirus RNA-binding domain"/>
    <property type="match status" value="1"/>
</dbReference>
<dbReference type="SUPFAM" id="SSF103068">
    <property type="entry name" value="Nucleocapsid protein dimerization domain"/>
    <property type="match status" value="1"/>
</dbReference>
<dbReference type="PROSITE" id="PS51929">
    <property type="entry name" value="COV_N_CTD"/>
    <property type="match status" value="1"/>
</dbReference>
<dbReference type="PROSITE" id="PS51928">
    <property type="entry name" value="COV_N_NTD"/>
    <property type="match status" value="1"/>
</dbReference>
<name>NCAP_PEDV7</name>
<accession>Q07499</accession>
<organismHost>
    <name type="scientific">Sus scrofa</name>
    <name type="common">Pig</name>
    <dbReference type="NCBI Taxonomy" id="9823"/>
</organismHost>